<comment type="function">
    <text evidence="1">Binds 23S rRNA and is also seen to make contacts with the A and possibly P site tRNAs.</text>
</comment>
<comment type="subunit">
    <text evidence="1">Part of the 50S ribosomal subunit.</text>
</comment>
<comment type="similarity">
    <text evidence="1">Belongs to the universal ribosomal protein uL16 family.</text>
</comment>
<reference key="1">
    <citation type="journal article" date="2005" name="J. Bacteriol.">
        <title>Insights on evolution of virulence and resistance from the complete genome analysis of an early methicillin-resistant Staphylococcus aureus strain and a biofilm-producing methicillin-resistant Staphylococcus epidermidis strain.</title>
        <authorList>
            <person name="Gill S.R."/>
            <person name="Fouts D.E."/>
            <person name="Archer G.L."/>
            <person name="Mongodin E.F."/>
            <person name="DeBoy R.T."/>
            <person name="Ravel J."/>
            <person name="Paulsen I.T."/>
            <person name="Kolonay J.F."/>
            <person name="Brinkac L.M."/>
            <person name="Beanan M.J."/>
            <person name="Dodson R.J."/>
            <person name="Daugherty S.C."/>
            <person name="Madupu R."/>
            <person name="Angiuoli S.V."/>
            <person name="Durkin A.S."/>
            <person name="Haft D.H."/>
            <person name="Vamathevan J.J."/>
            <person name="Khouri H."/>
            <person name="Utterback T.R."/>
            <person name="Lee C."/>
            <person name="Dimitrov G."/>
            <person name="Jiang L."/>
            <person name="Qin H."/>
            <person name="Weidman J."/>
            <person name="Tran K."/>
            <person name="Kang K.H."/>
            <person name="Hance I.R."/>
            <person name="Nelson K.E."/>
            <person name="Fraser C.M."/>
        </authorList>
    </citation>
    <scope>NUCLEOTIDE SEQUENCE [LARGE SCALE GENOMIC DNA]</scope>
    <source>
        <strain>COL</strain>
    </source>
</reference>
<protein>
    <recommendedName>
        <fullName evidence="1">Large ribosomal subunit protein uL16</fullName>
    </recommendedName>
    <alternativeName>
        <fullName evidence="3">50S ribosomal protein L16</fullName>
    </alternativeName>
</protein>
<proteinExistence type="inferred from homology"/>
<dbReference type="EMBL" id="CP000046">
    <property type="protein sequence ID" value="AAW37107.1"/>
    <property type="molecule type" value="Genomic_DNA"/>
</dbReference>
<dbReference type="RefSeq" id="WP_000926310.1">
    <property type="nucleotide sequence ID" value="NZ_JBGOFO010000004.1"/>
</dbReference>
<dbReference type="SMR" id="Q5HDW5"/>
<dbReference type="GeneID" id="98346555"/>
<dbReference type="KEGG" id="sac:SACOL2232"/>
<dbReference type="HOGENOM" id="CLU_078858_2_1_9"/>
<dbReference type="Proteomes" id="UP000000530">
    <property type="component" value="Chromosome"/>
</dbReference>
<dbReference type="GO" id="GO:0022625">
    <property type="term" value="C:cytosolic large ribosomal subunit"/>
    <property type="evidence" value="ECO:0007669"/>
    <property type="project" value="TreeGrafter"/>
</dbReference>
<dbReference type="GO" id="GO:0019843">
    <property type="term" value="F:rRNA binding"/>
    <property type="evidence" value="ECO:0007669"/>
    <property type="project" value="UniProtKB-UniRule"/>
</dbReference>
<dbReference type="GO" id="GO:0003735">
    <property type="term" value="F:structural constituent of ribosome"/>
    <property type="evidence" value="ECO:0007669"/>
    <property type="project" value="InterPro"/>
</dbReference>
<dbReference type="GO" id="GO:0000049">
    <property type="term" value="F:tRNA binding"/>
    <property type="evidence" value="ECO:0007669"/>
    <property type="project" value="UniProtKB-KW"/>
</dbReference>
<dbReference type="GO" id="GO:0006412">
    <property type="term" value="P:translation"/>
    <property type="evidence" value="ECO:0007669"/>
    <property type="project" value="UniProtKB-UniRule"/>
</dbReference>
<dbReference type="CDD" id="cd01433">
    <property type="entry name" value="Ribosomal_L16_L10e"/>
    <property type="match status" value="1"/>
</dbReference>
<dbReference type="FunFam" id="3.90.1170.10:FF:000001">
    <property type="entry name" value="50S ribosomal protein L16"/>
    <property type="match status" value="1"/>
</dbReference>
<dbReference type="Gene3D" id="3.90.1170.10">
    <property type="entry name" value="Ribosomal protein L10e/L16"/>
    <property type="match status" value="1"/>
</dbReference>
<dbReference type="HAMAP" id="MF_01342">
    <property type="entry name" value="Ribosomal_uL16"/>
    <property type="match status" value="1"/>
</dbReference>
<dbReference type="InterPro" id="IPR047873">
    <property type="entry name" value="Ribosomal_uL16"/>
</dbReference>
<dbReference type="InterPro" id="IPR000114">
    <property type="entry name" value="Ribosomal_uL16_bact-type"/>
</dbReference>
<dbReference type="InterPro" id="IPR020798">
    <property type="entry name" value="Ribosomal_uL16_CS"/>
</dbReference>
<dbReference type="InterPro" id="IPR016180">
    <property type="entry name" value="Ribosomal_uL16_dom"/>
</dbReference>
<dbReference type="InterPro" id="IPR036920">
    <property type="entry name" value="Ribosomal_uL16_sf"/>
</dbReference>
<dbReference type="NCBIfam" id="TIGR01164">
    <property type="entry name" value="rplP_bact"/>
    <property type="match status" value="1"/>
</dbReference>
<dbReference type="PANTHER" id="PTHR12220">
    <property type="entry name" value="50S/60S RIBOSOMAL PROTEIN L16"/>
    <property type="match status" value="1"/>
</dbReference>
<dbReference type="PANTHER" id="PTHR12220:SF13">
    <property type="entry name" value="LARGE RIBOSOMAL SUBUNIT PROTEIN UL16M"/>
    <property type="match status" value="1"/>
</dbReference>
<dbReference type="Pfam" id="PF00252">
    <property type="entry name" value="Ribosomal_L16"/>
    <property type="match status" value="1"/>
</dbReference>
<dbReference type="PRINTS" id="PR00060">
    <property type="entry name" value="RIBOSOMALL16"/>
</dbReference>
<dbReference type="SUPFAM" id="SSF54686">
    <property type="entry name" value="Ribosomal protein L16p/L10e"/>
    <property type="match status" value="1"/>
</dbReference>
<dbReference type="PROSITE" id="PS00586">
    <property type="entry name" value="RIBOSOMAL_L16_1"/>
    <property type="match status" value="1"/>
</dbReference>
<dbReference type="PROSITE" id="PS00701">
    <property type="entry name" value="RIBOSOMAL_L16_2"/>
    <property type="match status" value="1"/>
</dbReference>
<keyword id="KW-0687">Ribonucleoprotein</keyword>
<keyword id="KW-0689">Ribosomal protein</keyword>
<keyword id="KW-0694">RNA-binding</keyword>
<keyword id="KW-0699">rRNA-binding</keyword>
<keyword id="KW-0820">tRNA-binding</keyword>
<gene>
    <name evidence="1" type="primary">rplP</name>
    <name type="ordered locus">SACOL2232</name>
</gene>
<feature type="chain" id="PRO_0000062203" description="Large ribosomal subunit protein uL16">
    <location>
        <begin position="1"/>
        <end position="144"/>
    </location>
</feature>
<feature type="region of interest" description="Disordered" evidence="2">
    <location>
        <begin position="1"/>
        <end position="23"/>
    </location>
</feature>
<feature type="compositionally biased region" description="Basic residues" evidence="2">
    <location>
        <begin position="1"/>
        <end position="19"/>
    </location>
</feature>
<sequence>MLLPKRVKYRRQHRPKTTGRSKGGNYVTFGEFGLQATTTSWITSRQIESARIAMTRYMKRGGKVWIKIFPHTPYTKKPLEVRMGAGKGAVEGWIAVVKPGRILFEVAGVSEEVAREALRLASHKLPVKTKFVKREELGGETNES</sequence>
<accession>Q5HDW5</accession>
<organism>
    <name type="scientific">Staphylococcus aureus (strain COL)</name>
    <dbReference type="NCBI Taxonomy" id="93062"/>
    <lineage>
        <taxon>Bacteria</taxon>
        <taxon>Bacillati</taxon>
        <taxon>Bacillota</taxon>
        <taxon>Bacilli</taxon>
        <taxon>Bacillales</taxon>
        <taxon>Staphylococcaceae</taxon>
        <taxon>Staphylococcus</taxon>
    </lineage>
</organism>
<name>RL16_STAAC</name>
<evidence type="ECO:0000255" key="1">
    <source>
        <dbReference type="HAMAP-Rule" id="MF_01342"/>
    </source>
</evidence>
<evidence type="ECO:0000256" key="2">
    <source>
        <dbReference type="SAM" id="MobiDB-lite"/>
    </source>
</evidence>
<evidence type="ECO:0000305" key="3"/>